<keyword id="KW-0184">Conjugation</keyword>
<keyword id="KW-0963">Cytoplasm</keyword>
<keyword id="KW-0238">DNA-binding</keyword>
<keyword id="KW-0614">Plasmid</keyword>
<keyword id="KW-0804">Transcription</keyword>
<keyword id="KW-0805">Transcription regulation</keyword>
<protein>
    <recommendedName>
        <fullName>Relaxosome protein TraM</fullName>
    </recommendedName>
</protein>
<gene>
    <name type="primary">traM</name>
</gene>
<proteinExistence type="inferred from homology"/>
<geneLocation type="plasmid">
    <name>IncFVII pSU233</name>
</geneLocation>
<sequence length="127" mass="14526">MAKVNLYISNDAYEKINAIIEKRRQEGAREKDVSFSATASMLLELGLRVYEAQMERKESAFNQAEFNKLLLECVVKTQSSVAKILGIESLSPHVSGNPKFEYANMVEDIREKVSVEMERFFPKNDDE</sequence>
<evidence type="ECO:0000250" key="1"/>
<evidence type="ECO:0000305" key="2"/>
<reference key="1">
    <citation type="journal article" date="1992" name="Mol. Gen. Genet.">
        <title>Characterization and nucleotide sequence of the oriT-traM-finP region of the IncFVII plasmid pSU233.</title>
        <authorList>
            <person name="Salazar L."/>
            <person name="Lopez J."/>
            <person name="Andres I."/>
            <person name="Ortiz J.M."/>
            <person name="Rodriguez J.C."/>
        </authorList>
    </citation>
    <scope>NUCLEOTIDE SEQUENCE [GENOMIC DNA]</scope>
</reference>
<dbReference type="EMBL" id="X55896">
    <property type="protein sequence ID" value="CAA39383.1"/>
    <property type="molecule type" value="Genomic_DNA"/>
</dbReference>
<dbReference type="PIR" id="S26249">
    <property type="entry name" value="S26249"/>
</dbReference>
<dbReference type="RefSeq" id="WP_001151530.1">
    <property type="nucleotide sequence ID" value="NZ_WVVL01000081.1"/>
</dbReference>
<dbReference type="RefSeq" id="YP_008997961.1">
    <property type="nucleotide sequence ID" value="NC_023315.1"/>
</dbReference>
<dbReference type="SMR" id="P33787"/>
<dbReference type="GO" id="GO:0005737">
    <property type="term" value="C:cytoplasm"/>
    <property type="evidence" value="ECO:0007669"/>
    <property type="project" value="UniProtKB-SubCell"/>
</dbReference>
<dbReference type="GO" id="GO:0003677">
    <property type="term" value="F:DNA binding"/>
    <property type="evidence" value="ECO:0007669"/>
    <property type="project" value="UniProtKB-KW"/>
</dbReference>
<dbReference type="CDD" id="cd14804">
    <property type="entry name" value="Tra_M"/>
    <property type="match status" value="1"/>
</dbReference>
<dbReference type="Gene3D" id="1.10.287.2320">
    <property type="match status" value="1"/>
</dbReference>
<dbReference type="Gene3D" id="1.10.10.450">
    <property type="entry name" value="TraM protein, DNA-binding"/>
    <property type="match status" value="1"/>
</dbReference>
<dbReference type="InterPro" id="IPR010992">
    <property type="entry name" value="IHF-like_DNA-bd_dom_sf"/>
</dbReference>
<dbReference type="InterPro" id="IPR042073">
    <property type="entry name" value="TraM_DNA-bd"/>
</dbReference>
<dbReference type="InterPro" id="IPR007925">
    <property type="entry name" value="TRelaxosome_TraM"/>
</dbReference>
<dbReference type="NCBIfam" id="NF010267">
    <property type="entry name" value="PRK13713.1"/>
    <property type="match status" value="1"/>
</dbReference>
<dbReference type="Pfam" id="PF05261">
    <property type="entry name" value="Tra_M"/>
    <property type="match status" value="1"/>
</dbReference>
<dbReference type="SUPFAM" id="SSF47729">
    <property type="entry name" value="IHF-like DNA-binding proteins"/>
    <property type="match status" value="1"/>
</dbReference>
<dbReference type="SUPFAM" id="SSF140581">
    <property type="entry name" value="TraM-like"/>
    <property type="match status" value="1"/>
</dbReference>
<comment type="function">
    <text evidence="1">Conjugative DNA transfer (CDT) is the unidirectional transfer of ssDNA plasmid from a donor to a recipient cell. It is the central mechanism by which antibiotic resistance and virulence factors are propagated in bacterial populations. Part of the relaxosome, which facilitates a site- and strand-specific cut in the origin of transfer by TraI, at the nic site. Probably autoregulates its own expression. Plasmid specificity is conferred by the TraD-TraM pair (By similarity).</text>
</comment>
<comment type="subunit">
    <text evidence="1">Homotetramer. 2 homotetramers cooperatively bind to DNA although they do not contact each other; cooperativity is achieved by DNA kinking and unwinding. Part of the relaxosome, a complex composed of plasmid encoded TraI, TraM, TraY and host-encoded IHF which binds to the F plasmid origin of transfer (oriT) in a site- and sequence-specific manner. Interacts with TraD. Also interacts with TraY (By similarity).</text>
</comment>
<comment type="subcellular location">
    <subcellularLocation>
        <location evidence="1">Cytoplasm</location>
    </subcellularLocation>
</comment>
<comment type="similarity">
    <text evidence="2">Belongs to the relaxosome TraM family.</text>
</comment>
<name>TRAM7_ECOLX</name>
<organism>
    <name type="scientific">Escherichia coli</name>
    <dbReference type="NCBI Taxonomy" id="562"/>
    <lineage>
        <taxon>Bacteria</taxon>
        <taxon>Pseudomonadati</taxon>
        <taxon>Pseudomonadota</taxon>
        <taxon>Gammaproteobacteria</taxon>
        <taxon>Enterobacterales</taxon>
        <taxon>Enterobacteriaceae</taxon>
        <taxon>Escherichia</taxon>
    </lineage>
</organism>
<feature type="chain" id="PRO_0000068471" description="Relaxosome protein TraM">
    <location>
        <begin position="1"/>
        <end position="127"/>
    </location>
</feature>
<accession>P33787</accession>